<feature type="chain" id="PRO_0000219370" description="TSC22 domain family protein 3">
    <location>
        <begin position="1"/>
        <end position="134"/>
    </location>
</feature>
<feature type="region of interest" description="AP1-binding" evidence="1">
    <location>
        <begin position="1"/>
        <end position="60"/>
    </location>
</feature>
<feature type="region of interest" description="Leucine-zipper">
    <location>
        <begin position="76"/>
        <end position="97"/>
    </location>
</feature>
<feature type="region of interest" description="Disordered" evidence="3">
    <location>
        <begin position="108"/>
        <end position="134"/>
    </location>
</feature>
<feature type="modified residue" description="N-acetylmethionine" evidence="9">
    <location>
        <position position="1"/>
    </location>
</feature>
<feature type="modified residue" description="Phosphoserine" evidence="16">
    <location>
        <position position="102"/>
    </location>
</feature>
<feature type="splice variant" id="VSP_061579" description="In isoform 3.">
    <location>
        <begin position="1"/>
        <end position="57"/>
    </location>
</feature>
<feature type="splice variant" id="VSP_012689" description="In isoform 2." evidence="11">
    <original>MNTEMYQTPMEVAVYQLHNFSISFFSSLLGGDVVSVKLDN</original>
    <variation>MAQSKLDCRSPVGLDCCNCCLDLAHRSGLQRGSSGENNNPGSPTVSNFRQLQEKLVFENLNTDKLNSIMRQDSLEPVLRDPCYLINEGICNRNIDQTMLSILLFFH</variation>
    <location>
        <begin position="1"/>
        <end position="40"/>
    </location>
</feature>
<feature type="sequence conflict" description="In Ref. 1; CAA90644." evidence="13" ref="1">
    <original>I</original>
    <variation>F</variation>
    <location>
        <position position="54"/>
    </location>
</feature>
<feature type="modified residue" description="Phosphoserine" evidence="15">
    <location sequence="Q99576-3">
        <position position="42"/>
    </location>
</feature>
<feature type="modified residue" description="Phosphoserine" evidence="15">
    <location sequence="Q99576-3">
        <position position="73"/>
    </location>
</feature>
<feature type="modified residue" description="N-acetylmethionine" evidence="9">
    <location sequence="Q99576-5">
        <position position="1"/>
    </location>
</feature>
<dbReference type="EMBL" id="Z50781">
    <property type="protein sequence ID" value="CAA90644.1"/>
    <property type="molecule type" value="mRNA"/>
</dbReference>
<dbReference type="EMBL" id="AF228339">
    <property type="protein sequence ID" value="AAG12456.1"/>
    <property type="molecule type" value="mRNA"/>
</dbReference>
<dbReference type="EMBL" id="AF183393">
    <property type="protein sequence ID" value="AAD56234.1"/>
    <property type="molecule type" value="mRNA"/>
</dbReference>
<dbReference type="EMBL" id="AB025432">
    <property type="protein sequence ID" value="BAB18680.1"/>
    <property type="molecule type" value="mRNA"/>
</dbReference>
<dbReference type="EMBL" id="AF153603">
    <property type="protein sequence ID" value="AAD41085.1"/>
    <property type="molecule type" value="mRNA"/>
</dbReference>
<dbReference type="EMBL" id="AL110191">
    <property type="protein sequence ID" value="CAB53669.1"/>
    <property type="status" value="ALT_FRAME"/>
    <property type="molecule type" value="mRNA"/>
</dbReference>
<dbReference type="EMBL" id="AK092645">
    <property type="protein sequence ID" value="BAC03934.1"/>
    <property type="molecule type" value="mRNA"/>
</dbReference>
<dbReference type="EMBL" id="AK092669">
    <property type="protein sequence ID" value="BAG52587.1"/>
    <property type="molecule type" value="mRNA"/>
</dbReference>
<dbReference type="EMBL" id="AL590423">
    <property type="status" value="NOT_ANNOTATED_CDS"/>
    <property type="molecule type" value="Genomic_DNA"/>
</dbReference>
<dbReference type="EMBL" id="KF459299">
    <property type="status" value="NOT_ANNOTATED_CDS"/>
    <property type="molecule type" value="Genomic_DNA"/>
</dbReference>
<dbReference type="EMBL" id="CH471120">
    <property type="protein sequence ID" value="EAX02704.1"/>
    <property type="molecule type" value="Genomic_DNA"/>
</dbReference>
<dbReference type="EMBL" id="CH471120">
    <property type="protein sequence ID" value="EAX02705.1"/>
    <property type="molecule type" value="Genomic_DNA"/>
</dbReference>
<dbReference type="EMBL" id="CH471120">
    <property type="protein sequence ID" value="EAX02706.1"/>
    <property type="molecule type" value="Genomic_DNA"/>
</dbReference>
<dbReference type="EMBL" id="CR933650">
    <property type="protein sequence ID" value="CAI45951.1"/>
    <property type="molecule type" value="mRNA"/>
</dbReference>
<dbReference type="EMBL" id="BC018148">
    <property type="protein sequence ID" value="AAH18148.3"/>
    <property type="molecule type" value="mRNA"/>
</dbReference>
<dbReference type="EMBL" id="BC072446">
    <property type="protein sequence ID" value="AAH72446.1"/>
    <property type="molecule type" value="mRNA"/>
</dbReference>
<dbReference type="EMBL" id="CR533450">
    <property type="protein sequence ID" value="CAG38481.1"/>
    <property type="molecule type" value="mRNA"/>
</dbReference>
<dbReference type="CCDS" id="CCDS14530.1">
    <molecule id="Q99576-3"/>
</dbReference>
<dbReference type="CCDS" id="CCDS14531.1">
    <molecule id="Q99576-1"/>
</dbReference>
<dbReference type="CCDS" id="CCDS35365.1">
    <molecule id="Q99576-5"/>
</dbReference>
<dbReference type="PIR" id="T14749">
    <property type="entry name" value="T14749"/>
</dbReference>
<dbReference type="RefSeq" id="NP_001015881.1">
    <molecule id="Q99576-5"/>
    <property type="nucleotide sequence ID" value="NM_001015881.2"/>
</dbReference>
<dbReference type="RefSeq" id="NP_001305397.1">
    <molecule id="Q99576-3"/>
    <property type="nucleotide sequence ID" value="NM_001318468.1"/>
</dbReference>
<dbReference type="RefSeq" id="NP_001305399.1">
    <molecule id="Q99576-3"/>
    <property type="nucleotide sequence ID" value="NM_001318470.1"/>
</dbReference>
<dbReference type="RefSeq" id="NP_004080.2">
    <molecule id="Q99576-1"/>
    <property type="nucleotide sequence ID" value="NM_004089.3"/>
</dbReference>
<dbReference type="RefSeq" id="NP_932174.1">
    <molecule id="Q99576-3"/>
    <property type="nucleotide sequence ID" value="NM_198057.3"/>
</dbReference>
<dbReference type="RefSeq" id="XP_005262156.1">
    <property type="nucleotide sequence ID" value="XM_005262099.1"/>
</dbReference>
<dbReference type="RefSeq" id="XP_005262157.1">
    <property type="nucleotide sequence ID" value="XM_005262100.1"/>
</dbReference>
<dbReference type="RefSeq" id="XP_005262159.1">
    <property type="nucleotide sequence ID" value="XM_005262102.1"/>
</dbReference>
<dbReference type="RefSeq" id="XP_005262160.1">
    <property type="nucleotide sequence ID" value="XM_005262103.3"/>
</dbReference>
<dbReference type="RefSeq" id="XP_011529186.1">
    <property type="nucleotide sequence ID" value="XM_011530884.1"/>
</dbReference>
<dbReference type="RefSeq" id="XP_016884824.1">
    <property type="nucleotide sequence ID" value="XM_017029335.1"/>
</dbReference>
<dbReference type="SMR" id="Q99576"/>
<dbReference type="BioGRID" id="108165">
    <property type="interactions" value="65"/>
</dbReference>
<dbReference type="FunCoup" id="Q99576">
    <property type="interactions" value="707"/>
</dbReference>
<dbReference type="IntAct" id="Q99576">
    <property type="interactions" value="39"/>
</dbReference>
<dbReference type="STRING" id="9606.ENSP00000361458"/>
<dbReference type="BindingDB" id="Q99576"/>
<dbReference type="iPTMnet" id="Q99576"/>
<dbReference type="PhosphoSitePlus" id="Q99576"/>
<dbReference type="BioMuta" id="TSC22D3"/>
<dbReference type="DMDM" id="14195584"/>
<dbReference type="jPOST" id="Q99576"/>
<dbReference type="MassIVE" id="Q99576"/>
<dbReference type="PaxDb" id="9606-ENSP00000361458"/>
<dbReference type="PeptideAtlas" id="Q99576"/>
<dbReference type="ProteomicsDB" id="63095"/>
<dbReference type="ProteomicsDB" id="78335">
    <molecule id="Q99576-1"/>
</dbReference>
<dbReference type="ProteomicsDB" id="78336">
    <molecule id="Q99576-3"/>
</dbReference>
<dbReference type="Pumba" id="Q99576"/>
<dbReference type="Antibodypedia" id="29322">
    <property type="antibodies" value="456 antibodies from 32 providers"/>
</dbReference>
<dbReference type="DNASU" id="1831"/>
<dbReference type="Ensembl" id="ENST00000315660.8">
    <molecule id="Q99576-3"/>
    <property type="protein sequence ID" value="ENSP00000314655.4"/>
    <property type="gene ID" value="ENSG00000157514.18"/>
</dbReference>
<dbReference type="Ensembl" id="ENST00000372383.9">
    <molecule id="Q99576-3"/>
    <property type="protein sequence ID" value="ENSP00000361458.4"/>
    <property type="gene ID" value="ENSG00000157514.18"/>
</dbReference>
<dbReference type="Ensembl" id="ENST00000372384.6">
    <molecule id="Q99576-3"/>
    <property type="protein sequence ID" value="ENSP00000361459.2"/>
    <property type="gene ID" value="ENSG00000157514.18"/>
</dbReference>
<dbReference type="Ensembl" id="ENST00000372390.8">
    <molecule id="Q99576-5"/>
    <property type="protein sequence ID" value="ENSP00000361466.4"/>
    <property type="gene ID" value="ENSG00000157514.18"/>
</dbReference>
<dbReference type="Ensembl" id="ENST00000372397.6">
    <molecule id="Q99576-1"/>
    <property type="protein sequence ID" value="ENSP00000361474.2"/>
    <property type="gene ID" value="ENSG00000157514.18"/>
</dbReference>
<dbReference type="Ensembl" id="ENST00000506081.5">
    <molecule id="Q99576-3"/>
    <property type="protein sequence ID" value="ENSP00000427427.1"/>
    <property type="gene ID" value="ENSG00000157514.18"/>
</dbReference>
<dbReference type="GeneID" id="1831"/>
<dbReference type="KEGG" id="hsa:1831"/>
<dbReference type="MANE-Select" id="ENST00000372383.9">
    <molecule id="Q99576-3"/>
    <property type="protein sequence ID" value="ENSP00000361458.4"/>
    <property type="RefSeq nucleotide sequence ID" value="NM_198057.3"/>
    <property type="RefSeq protein sequence ID" value="NP_932174.1"/>
</dbReference>
<dbReference type="UCSC" id="uc004eng.4">
    <molecule id="Q99576-1"/>
    <property type="organism name" value="human"/>
</dbReference>
<dbReference type="AGR" id="HGNC:3051"/>
<dbReference type="CTD" id="1831"/>
<dbReference type="DisGeNET" id="1831"/>
<dbReference type="GeneCards" id="TSC22D3"/>
<dbReference type="HGNC" id="HGNC:3051">
    <property type="gene designation" value="TSC22D3"/>
</dbReference>
<dbReference type="HPA" id="ENSG00000157514">
    <property type="expression patterns" value="Low tissue specificity"/>
</dbReference>
<dbReference type="MIM" id="300506">
    <property type="type" value="gene"/>
</dbReference>
<dbReference type="neXtProt" id="NX_Q99576"/>
<dbReference type="OpenTargets" id="ENSG00000157514"/>
<dbReference type="PharmGKB" id="PA27504"/>
<dbReference type="VEuPathDB" id="HostDB:ENSG00000157514"/>
<dbReference type="eggNOG" id="KOG4797">
    <property type="taxonomic scope" value="Eukaryota"/>
</dbReference>
<dbReference type="GeneTree" id="ENSGT00940000156656"/>
<dbReference type="HOGENOM" id="CLU_148757_0_0_1"/>
<dbReference type="InParanoid" id="Q99576"/>
<dbReference type="OMA" id="EMYQSPM"/>
<dbReference type="OrthoDB" id="8961796at2759"/>
<dbReference type="PAN-GO" id="Q99576">
    <property type="GO annotations" value="0 GO annotations based on evolutionary models"/>
</dbReference>
<dbReference type="PhylomeDB" id="Q99576"/>
<dbReference type="TreeFam" id="TF329224"/>
<dbReference type="PathwayCommons" id="Q99576"/>
<dbReference type="Reactome" id="R-HSA-2672351">
    <property type="pathway name" value="Stimuli-sensing channels"/>
</dbReference>
<dbReference type="SignaLink" id="Q99576"/>
<dbReference type="SIGNOR" id="Q99576"/>
<dbReference type="BioGRID-ORCS" id="1831">
    <property type="hits" value="18 hits in 797 CRISPR screens"/>
</dbReference>
<dbReference type="ChiTaRS" id="TSC22D3">
    <property type="organism name" value="human"/>
</dbReference>
<dbReference type="GeneWiki" id="TSC22D3"/>
<dbReference type="GenomeRNAi" id="1831"/>
<dbReference type="Pharos" id="Q99576">
    <property type="development level" value="Tbio"/>
</dbReference>
<dbReference type="PRO" id="PR:Q99576"/>
<dbReference type="Proteomes" id="UP000005640">
    <property type="component" value="Chromosome X"/>
</dbReference>
<dbReference type="RNAct" id="Q99576">
    <property type="molecule type" value="protein"/>
</dbReference>
<dbReference type="Bgee" id="ENSG00000157514">
    <property type="expression patterns" value="Expressed in right lung and 215 other cell types or tissues"/>
</dbReference>
<dbReference type="ExpressionAtlas" id="Q99576">
    <property type="expression patterns" value="baseline and differential"/>
</dbReference>
<dbReference type="GO" id="GO:0005829">
    <property type="term" value="C:cytosol"/>
    <property type="evidence" value="ECO:0000304"/>
    <property type="project" value="Reactome"/>
</dbReference>
<dbReference type="GO" id="GO:0005634">
    <property type="term" value="C:nucleus"/>
    <property type="evidence" value="ECO:0007669"/>
    <property type="project" value="UniProtKB-SubCell"/>
</dbReference>
<dbReference type="GO" id="GO:0070236">
    <property type="term" value="P:negative regulation of activation-induced cell death of T cells"/>
    <property type="evidence" value="ECO:0000318"/>
    <property type="project" value="GO_Central"/>
</dbReference>
<dbReference type="GO" id="GO:0006357">
    <property type="term" value="P:regulation of transcription by RNA polymerase II"/>
    <property type="evidence" value="ECO:0007669"/>
    <property type="project" value="InterPro"/>
</dbReference>
<dbReference type="GO" id="GO:0006970">
    <property type="term" value="P:response to osmotic stress"/>
    <property type="evidence" value="ECO:0007669"/>
    <property type="project" value="Ensembl"/>
</dbReference>
<dbReference type="CDD" id="cd21940">
    <property type="entry name" value="ZIP_TSC22D3"/>
    <property type="match status" value="1"/>
</dbReference>
<dbReference type="FunFam" id="1.20.5.490:FF:000002">
    <property type="entry name" value="TSC22 domain family, member 1"/>
    <property type="match status" value="1"/>
</dbReference>
<dbReference type="Gene3D" id="1.20.5.490">
    <property type="entry name" value="Single helix bin"/>
    <property type="match status" value="1"/>
</dbReference>
<dbReference type="InterPro" id="IPR000580">
    <property type="entry name" value="TSC22/Bun"/>
</dbReference>
<dbReference type="InterPro" id="IPR047862">
    <property type="entry name" value="TSC22/BUN_CS"/>
</dbReference>
<dbReference type="PANTHER" id="PTHR12348">
    <property type="entry name" value="TSC22"/>
    <property type="match status" value="1"/>
</dbReference>
<dbReference type="PANTHER" id="PTHR12348:SF24">
    <property type="entry name" value="TSC22 DOMAIN FAMILY PROTEIN 3"/>
    <property type="match status" value="1"/>
</dbReference>
<dbReference type="Pfam" id="PF01166">
    <property type="entry name" value="TSC22"/>
    <property type="match status" value="1"/>
</dbReference>
<dbReference type="SUPFAM" id="SSF58026">
    <property type="entry name" value="Delta-sleep-inducing peptide immunoreactive peptide"/>
    <property type="match status" value="1"/>
</dbReference>
<dbReference type="PROSITE" id="PS01289">
    <property type="entry name" value="TSC22"/>
    <property type="match status" value="1"/>
</dbReference>
<organism>
    <name type="scientific">Homo sapiens</name>
    <name type="common">Human</name>
    <dbReference type="NCBI Taxonomy" id="9606"/>
    <lineage>
        <taxon>Eukaryota</taxon>
        <taxon>Metazoa</taxon>
        <taxon>Chordata</taxon>
        <taxon>Craniata</taxon>
        <taxon>Vertebrata</taxon>
        <taxon>Euteleostomi</taxon>
        <taxon>Mammalia</taxon>
        <taxon>Eutheria</taxon>
        <taxon>Euarchontoglires</taxon>
        <taxon>Primates</taxon>
        <taxon>Haplorrhini</taxon>
        <taxon>Catarrhini</taxon>
        <taxon>Hominidae</taxon>
        <taxon>Homo</taxon>
    </lineage>
</organism>
<name>T22D3_HUMAN</name>
<evidence type="ECO:0000250" key="1"/>
<evidence type="ECO:0000250" key="2">
    <source>
        <dbReference type="UniProtKB" id="Q9Z2S7"/>
    </source>
</evidence>
<evidence type="ECO:0000256" key="3">
    <source>
        <dbReference type="SAM" id="MobiDB-lite"/>
    </source>
</evidence>
<evidence type="ECO:0000269" key="4">
    <source>
    </source>
</evidence>
<evidence type="ECO:0000269" key="5">
    <source>
    </source>
</evidence>
<evidence type="ECO:0000269" key="6">
    <source>
    </source>
</evidence>
<evidence type="ECO:0000269" key="7">
    <source>
    </source>
</evidence>
<evidence type="ECO:0000269" key="8">
    <source>
    </source>
</evidence>
<evidence type="ECO:0000269" key="9">
    <source>
    </source>
</evidence>
<evidence type="ECO:0000303" key="10">
    <source>
    </source>
</evidence>
<evidence type="ECO:0000303" key="11">
    <source>
    </source>
</evidence>
<evidence type="ECO:0000303" key="12">
    <source>
    </source>
</evidence>
<evidence type="ECO:0000305" key="13"/>
<evidence type="ECO:0000312" key="14">
    <source>
        <dbReference type="HGNC" id="HGNC:3051"/>
    </source>
</evidence>
<evidence type="ECO:0007744" key="15">
    <source>
    </source>
</evidence>
<evidence type="ECO:0007744" key="16">
    <source>
    </source>
</evidence>
<comment type="function">
    <text evidence="2 5 6 7">Protects T-cells from IL2 deprivation-induced apoptosis through the inhibition of FOXO3A transcriptional activity that leads to the down-regulation of the pro-apoptotic factor BCL2L11 (PubMed:15031210). In macrophages, plays a role in the anti-inflammatory and immunosuppressive effects of glucocorticoids and IL10 (PubMed:12393603). In T-cells, inhibits anti-CD3-induced NFKB1 nuclear translocation and thereby NFKB1 DNA-binding activities (PubMed:11468175). In vitro, suppresses AP-1 transcription factor complex DNA-binding activities (By similarity).</text>
</comment>
<comment type="function">
    <molecule>Isoform 1</molecule>
    <text evidence="2">Inhibits myogenic differentiation and mediates anti-myogenic effects of glucocorticoids by binding and regulating MYOD1 and HDAC1 transcriptional activity resulting in reduced expression of MYOG.</text>
</comment>
<comment type="subunit">
    <text evidence="2 5 6">Can form homodimers, however it is likely to function as a monomer (By similarity). Interacts with NFKB1 (PubMed:11468175, PubMed:12393603). Interacts (via N-terminus) with JUN and FOS; these interactions inhibit the binding of active AP1 to its target DNA (By similarity).</text>
</comment>
<comment type="subunit">
    <molecule>Isoform 1</molecule>
    <text evidence="2">Interacts with MYOD1 (By similarity). Interacts with HDAC1; this interaction affects HDAC1 activity on MYOG promoter and thus inhibits MYOD1 transcriptional activity (By similarity).</text>
</comment>
<comment type="interaction">
    <interactant intactId="EBI-750174">
        <id>Q99576</id>
    </interactant>
    <interactant intactId="EBI-742610">
        <id>Q9Y6D9</id>
        <label>MAD1L1</label>
    </interactant>
    <organismsDiffer>false</organismsDiffer>
    <experiments>3</experiments>
</comment>
<comment type="interaction">
    <interactant intactId="EBI-750174">
        <id>Q99576</id>
    </interactant>
    <interactant intactId="EBI-10829018">
        <id>Q04864-2</id>
        <label>REL</label>
    </interactant>
    <organismsDiffer>false</organismsDiffer>
    <experiments>3</experiments>
</comment>
<comment type="interaction">
    <interactant intactId="EBI-10294415">
        <id>Q99576-3</id>
    </interactant>
    <interactant intactId="EBI-741210">
        <id>Q0VDD7</id>
        <label>BRME1</label>
    </interactant>
    <organismsDiffer>false</organismsDiffer>
    <experiments>3</experiments>
</comment>
<comment type="interaction">
    <interactant intactId="EBI-10294415">
        <id>Q99576-3</id>
    </interactant>
    <interactant intactId="EBI-742610">
        <id>Q9Y6D9</id>
        <label>MAD1L1</label>
    </interactant>
    <organismsDiffer>false</organismsDiffer>
    <experiments>3</experiments>
</comment>
<comment type="subcellular location">
    <molecule>Isoform 1</molecule>
    <subcellularLocation>
        <location evidence="2">Cytoplasm</location>
    </subcellularLocation>
    <subcellularLocation>
        <location evidence="2">Nucleus</location>
    </subcellularLocation>
    <text evidence="2">Localization depends on differentiation status of myoblasts (By similarity). In undifferentiated myoblasts; localizes to the cytoplasm, but in differentiating myoblast; localizes to the nucleus (By similarity).</text>
</comment>
<comment type="alternative products">
    <event type="alternative splicing"/>
    <isoform>
        <id>Q99576-1</id>
        <name>1</name>
        <sequence type="displayed"/>
    </isoform>
    <isoform>
        <id>Q99576-3</id>
        <name>2</name>
        <sequence type="described" ref="VSP_012689"/>
    </isoform>
    <isoform>
        <id>Q99576-5</id>
        <name>3</name>
        <sequence type="described" ref="VSP_061579"/>
    </isoform>
</comment>
<comment type="tissue specificity">
    <text evidence="4 6 8">Ubiquitously expressed, including in the fetal brain and liver (PubMed:26752201). Expressed in brain, lung, spleen and skeletal muscle (PubMed:11313722, PubMed:12393603). Lower levels detected in heart and kidney (PubMed:11313722, PubMed:12393603). Not detected in the pancreas (PubMed:11313722). In non-lymphoid tissues, in the absence of inflammation, the major source of constitutive expression is the macrophage lineage (PubMed:12393603). Also expressed in cells from different hemopoietic cell lineages, including bone marrow cells, CD34+ stem cells, mature B- and T-cells, monocytes and granulocytes (PubMed:11313722). Down-regulated in activated macrophages from inflammatory lesions of delayed-type hypersensitivity (DTH) reactions, such as in tuberculosis and in Crohn disease, whereas in Burkitt lymphoma, persists in macrophages involved in the phagocytosis of apoptotic malignant cells (PubMed:12393603).</text>
</comment>
<comment type="induction">
    <text evidence="8">Induced in T-lymphocytes by IL2 deprivation.</text>
</comment>
<comment type="domain">
    <text evidence="2">The leucine-zipper is involved in homodimerization.</text>
</comment>
<comment type="similarity">
    <text evidence="13">Belongs to the TSC-22/Dip/Bun family.</text>
</comment>
<comment type="sequence caution" evidence="13">
    <conflict type="frameshift">
        <sequence resource="EMBL-CDS" id="CAB53669"/>
    </conflict>
</comment>
<accession>Q99576</accession>
<accession>Q5H9S3</accession>
<accession>Q5JRI9</accession>
<accession>Q5JRJ2</accession>
<accession>Q6FIH6</accession>
<accession>Q8NAI1</accession>
<accession>Q8WVB9</accession>
<accession>Q9UBN5</accession>
<accession>Q9UG13</accession>
<sequence length="134" mass="14810">MNTEMYQTPMEVAVYQLHNFSISFFSSLLGGDVVSVKLDNSASGASVVAIDNKIEQAMDLVKNHLMYAVREEVEILKEQIRELVEKNSQLERENTLLKTLASPEQLEKFQSCLSPEEPAPESPQVPEAPGGSAV</sequence>
<protein>
    <recommendedName>
        <fullName evidence="14">TSC22 domain family protein 3</fullName>
    </recommendedName>
    <alternativeName>
        <fullName evidence="12">DSIP-immunoreactive peptide</fullName>
        <shortName evidence="12">Protein DIP</shortName>
        <shortName evidence="12">hDIP</shortName>
    </alternativeName>
    <alternativeName>
        <fullName>Delta sleep-inducing peptide immunoreactor</fullName>
    </alternativeName>
    <alternativeName>
        <fullName evidence="10">Glucocorticoid-induced leucine zipper protein</fullName>
        <shortName evidence="10">GILZ</shortName>
    </alternativeName>
    <alternativeName>
        <fullName>TSC-22-like protein</fullName>
    </alternativeName>
    <alternativeName>
        <fullName>TSC-22-related protein</fullName>
        <shortName>TSC-22R</shortName>
    </alternativeName>
</protein>
<reference key="1">
    <citation type="journal article" date="1996" name="Biochim. Biophys. Acta">
        <title>hDIP -- a potential transcriptional regulator related to murine TSC-22 and Drosophila shortsighted (shs) -- is expressed in a large number of human tissues.</title>
        <authorList>
            <person name="Vogel P."/>
            <person name="Maegert H.-J."/>
            <person name="Cieslak A."/>
            <person name="Adermann K."/>
            <person name="Forssmann W.-G."/>
        </authorList>
    </citation>
    <scope>NUCLEOTIDE SEQUENCE [MRNA] (ISOFORM 3)</scope>
    <source>
        <tissue>Fetal brain</tissue>
    </source>
</reference>
<reference key="2">
    <citation type="journal article" date="2001" name="Cell Death Differ.">
        <title>Cloning, chromosomal assignment and tissue distribution of human GILZ, a glucocorticoid hormone-induced gene.</title>
        <authorList>
            <person name="Cannarile L."/>
            <person name="Zollo O."/>
            <person name="D'Adamio F."/>
            <person name="Ayroldi E."/>
            <person name="Marchetti C."/>
            <person name="Tabilio A."/>
            <person name="Bruscoli S."/>
            <person name="Riccardi C."/>
        </authorList>
    </citation>
    <scope>NUCLEOTIDE SEQUENCE [MRNA] (ISOFORM 1)</scope>
    <scope>TISSUE SPECIFICITY</scope>
    <source>
        <tissue>T-cell</tissue>
    </source>
</reference>
<reference key="3">
    <citation type="submission" date="1999-09" db="EMBL/GenBank/DDBJ databases">
        <title>Full-length sequence of ocular cDNA clones.</title>
        <authorList>
            <person name="Wistow G.J."/>
        </authorList>
    </citation>
    <scope>NUCLEOTIDE SEQUENCE [MRNA] (ISOFORM 1)</scope>
    <source>
        <tissue>Iris</tissue>
    </source>
</reference>
<reference key="4">
    <citation type="submission" date="1999-03" db="EMBL/GenBank/DDBJ databases">
        <title>Human GILZ.</title>
        <authorList>
            <person name="Okada T."/>
        </authorList>
    </citation>
    <scope>NUCLEOTIDE SEQUENCE [MRNA] (ISOFORM 1)</scope>
</reference>
<reference key="5">
    <citation type="submission" date="1999-05" db="EMBL/GenBank/DDBJ databases">
        <title>A catalogue of genes in the human dermal papilla cells as identified by expressed sequence tags.</title>
        <authorList>
            <person name="Kim M.K."/>
            <person name="Kim Y.H."/>
            <person name="Suh J.M."/>
            <person name="Lee H.M."/>
            <person name="Chung H.J."/>
            <person name="Sohn M.Y."/>
            <person name="Hwang S.Y."/>
            <person name="Im S.U."/>
            <person name="Jung E.J."/>
            <person name="Kim J.C."/>
        </authorList>
    </citation>
    <scope>NUCLEOTIDE SEQUENCE [LARGE SCALE MRNA] (ISOFORM 1)</scope>
    <source>
        <tissue>Hair follicle dermal papilla</tissue>
    </source>
</reference>
<reference key="6">
    <citation type="journal article" date="2001" name="Genome Res.">
        <title>Towards a catalog of human genes and proteins: sequencing and analysis of 500 novel complete protein coding human cDNAs.</title>
        <authorList>
            <person name="Wiemann S."/>
            <person name="Weil B."/>
            <person name="Wellenreuther R."/>
            <person name="Gassenhuber J."/>
            <person name="Glassl S."/>
            <person name="Ansorge W."/>
            <person name="Boecher M."/>
            <person name="Bloecker H."/>
            <person name="Bauersachs S."/>
            <person name="Blum H."/>
            <person name="Lauber J."/>
            <person name="Duesterhoeft A."/>
            <person name="Beyer A."/>
            <person name="Koehrer K."/>
            <person name="Strack N."/>
            <person name="Mewes H.-W."/>
            <person name="Ottenwaelder B."/>
            <person name="Obermaier B."/>
            <person name="Tampe J."/>
            <person name="Heubner D."/>
            <person name="Wambutt R."/>
            <person name="Korn B."/>
            <person name="Klein M."/>
            <person name="Poustka A."/>
        </authorList>
    </citation>
    <scope>NUCLEOTIDE SEQUENCE [LARGE SCALE MRNA] (ISOFORM 1)</scope>
    <source>
        <tissue>Fetal kidney</tissue>
    </source>
</reference>
<reference key="7">
    <citation type="journal article" date="2004" name="Nat. Genet.">
        <title>Complete sequencing and characterization of 21,243 full-length human cDNAs.</title>
        <authorList>
            <person name="Ota T."/>
            <person name="Suzuki Y."/>
            <person name="Nishikawa T."/>
            <person name="Otsuki T."/>
            <person name="Sugiyama T."/>
            <person name="Irie R."/>
            <person name="Wakamatsu A."/>
            <person name="Hayashi K."/>
            <person name="Sato H."/>
            <person name="Nagai K."/>
            <person name="Kimura K."/>
            <person name="Makita H."/>
            <person name="Sekine M."/>
            <person name="Obayashi M."/>
            <person name="Nishi T."/>
            <person name="Shibahara T."/>
            <person name="Tanaka T."/>
            <person name="Ishii S."/>
            <person name="Yamamoto J."/>
            <person name="Saito K."/>
            <person name="Kawai Y."/>
            <person name="Isono Y."/>
            <person name="Nakamura Y."/>
            <person name="Nagahari K."/>
            <person name="Murakami K."/>
            <person name="Yasuda T."/>
            <person name="Iwayanagi T."/>
            <person name="Wagatsuma M."/>
            <person name="Shiratori A."/>
            <person name="Sudo H."/>
            <person name="Hosoiri T."/>
            <person name="Kaku Y."/>
            <person name="Kodaira H."/>
            <person name="Kondo H."/>
            <person name="Sugawara M."/>
            <person name="Takahashi M."/>
            <person name="Kanda K."/>
            <person name="Yokoi T."/>
            <person name="Furuya T."/>
            <person name="Kikkawa E."/>
            <person name="Omura Y."/>
            <person name="Abe K."/>
            <person name="Kamihara K."/>
            <person name="Katsuta N."/>
            <person name="Sato K."/>
            <person name="Tanikawa M."/>
            <person name="Yamazaki M."/>
            <person name="Ninomiya K."/>
            <person name="Ishibashi T."/>
            <person name="Yamashita H."/>
            <person name="Murakawa K."/>
            <person name="Fujimori K."/>
            <person name="Tanai H."/>
            <person name="Kimata M."/>
            <person name="Watanabe M."/>
            <person name="Hiraoka S."/>
            <person name="Chiba Y."/>
            <person name="Ishida S."/>
            <person name="Ono Y."/>
            <person name="Takiguchi S."/>
            <person name="Watanabe S."/>
            <person name="Yosida M."/>
            <person name="Hotuta T."/>
            <person name="Kusano J."/>
            <person name="Kanehori K."/>
            <person name="Takahashi-Fujii A."/>
            <person name="Hara H."/>
            <person name="Tanase T.-O."/>
            <person name="Nomura Y."/>
            <person name="Togiya S."/>
            <person name="Komai F."/>
            <person name="Hara R."/>
            <person name="Takeuchi K."/>
            <person name="Arita M."/>
            <person name="Imose N."/>
            <person name="Musashino K."/>
            <person name="Yuuki H."/>
            <person name="Oshima A."/>
            <person name="Sasaki N."/>
            <person name="Aotsuka S."/>
            <person name="Yoshikawa Y."/>
            <person name="Matsunawa H."/>
            <person name="Ichihara T."/>
            <person name="Shiohata N."/>
            <person name="Sano S."/>
            <person name="Moriya S."/>
            <person name="Momiyama H."/>
            <person name="Satoh N."/>
            <person name="Takami S."/>
            <person name="Terashima Y."/>
            <person name="Suzuki O."/>
            <person name="Nakagawa S."/>
            <person name="Senoh A."/>
            <person name="Mizoguchi H."/>
            <person name="Goto Y."/>
            <person name="Shimizu F."/>
            <person name="Wakebe H."/>
            <person name="Hishigaki H."/>
            <person name="Watanabe T."/>
            <person name="Sugiyama A."/>
            <person name="Takemoto M."/>
            <person name="Kawakami B."/>
            <person name="Yamazaki M."/>
            <person name="Watanabe K."/>
            <person name="Kumagai A."/>
            <person name="Itakura S."/>
            <person name="Fukuzumi Y."/>
            <person name="Fujimori Y."/>
            <person name="Komiyama M."/>
            <person name="Tashiro H."/>
            <person name="Tanigami A."/>
            <person name="Fujiwara T."/>
            <person name="Ono T."/>
            <person name="Yamada K."/>
            <person name="Fujii Y."/>
            <person name="Ozaki K."/>
            <person name="Hirao M."/>
            <person name="Ohmori Y."/>
            <person name="Kawabata A."/>
            <person name="Hikiji T."/>
            <person name="Kobatake N."/>
            <person name="Inagaki H."/>
            <person name="Ikema Y."/>
            <person name="Okamoto S."/>
            <person name="Okitani R."/>
            <person name="Kawakami T."/>
            <person name="Noguchi S."/>
            <person name="Itoh T."/>
            <person name="Shigeta K."/>
            <person name="Senba T."/>
            <person name="Matsumura K."/>
            <person name="Nakajima Y."/>
            <person name="Mizuno T."/>
            <person name="Morinaga M."/>
            <person name="Sasaki M."/>
            <person name="Togashi T."/>
            <person name="Oyama M."/>
            <person name="Hata H."/>
            <person name="Watanabe M."/>
            <person name="Komatsu T."/>
            <person name="Mizushima-Sugano J."/>
            <person name="Satoh T."/>
            <person name="Shirai Y."/>
            <person name="Takahashi Y."/>
            <person name="Nakagawa K."/>
            <person name="Okumura K."/>
            <person name="Nagase T."/>
            <person name="Nomura N."/>
            <person name="Kikuchi H."/>
            <person name="Masuho Y."/>
            <person name="Yamashita R."/>
            <person name="Nakai K."/>
            <person name="Yada T."/>
            <person name="Nakamura Y."/>
            <person name="Ohara O."/>
            <person name="Isogai T."/>
            <person name="Sugano S."/>
        </authorList>
    </citation>
    <scope>NUCLEOTIDE SEQUENCE [LARGE SCALE MRNA] (ISOFORM 2)</scope>
    <source>
        <tissue>Prostate</tissue>
        <tissue>Pulmonary artery</tissue>
    </source>
</reference>
<reference key="8">
    <citation type="journal article" date="2007" name="BMC Genomics">
        <title>The full-ORF clone resource of the German cDNA consortium.</title>
        <authorList>
            <person name="Bechtel S."/>
            <person name="Rosenfelder H."/>
            <person name="Duda A."/>
            <person name="Schmidt C.P."/>
            <person name="Ernst U."/>
            <person name="Wellenreuther R."/>
            <person name="Mehrle A."/>
            <person name="Schuster C."/>
            <person name="Bahr A."/>
            <person name="Bloecker H."/>
            <person name="Heubner D."/>
            <person name="Hoerlein A."/>
            <person name="Michel G."/>
            <person name="Wedler H."/>
            <person name="Koehrer K."/>
            <person name="Ottenwaelder B."/>
            <person name="Poustka A."/>
            <person name="Wiemann S."/>
            <person name="Schupp I."/>
        </authorList>
    </citation>
    <scope>NUCLEOTIDE SEQUENCE [LARGE SCALE MRNA] (ISOFORM 1)</scope>
    <source>
        <tissue>Adipose tissue</tissue>
    </source>
</reference>
<reference key="9">
    <citation type="journal article" date="2005" name="Nature">
        <title>The DNA sequence of the human X chromosome.</title>
        <authorList>
            <person name="Ross M.T."/>
            <person name="Grafham D.V."/>
            <person name="Coffey A.J."/>
            <person name="Scherer S."/>
            <person name="McLay K."/>
            <person name="Muzny D."/>
            <person name="Platzer M."/>
            <person name="Howell G.R."/>
            <person name="Burrows C."/>
            <person name="Bird C.P."/>
            <person name="Frankish A."/>
            <person name="Lovell F.L."/>
            <person name="Howe K.L."/>
            <person name="Ashurst J.L."/>
            <person name="Fulton R.S."/>
            <person name="Sudbrak R."/>
            <person name="Wen G."/>
            <person name="Jones M.C."/>
            <person name="Hurles M.E."/>
            <person name="Andrews T.D."/>
            <person name="Scott C.E."/>
            <person name="Searle S."/>
            <person name="Ramser J."/>
            <person name="Whittaker A."/>
            <person name="Deadman R."/>
            <person name="Carter N.P."/>
            <person name="Hunt S.E."/>
            <person name="Chen R."/>
            <person name="Cree A."/>
            <person name="Gunaratne P."/>
            <person name="Havlak P."/>
            <person name="Hodgson A."/>
            <person name="Metzker M.L."/>
            <person name="Richards S."/>
            <person name="Scott G."/>
            <person name="Steffen D."/>
            <person name="Sodergren E."/>
            <person name="Wheeler D.A."/>
            <person name="Worley K.C."/>
            <person name="Ainscough R."/>
            <person name="Ambrose K.D."/>
            <person name="Ansari-Lari M.A."/>
            <person name="Aradhya S."/>
            <person name="Ashwell R.I."/>
            <person name="Babbage A.K."/>
            <person name="Bagguley C.L."/>
            <person name="Ballabio A."/>
            <person name="Banerjee R."/>
            <person name="Barker G.E."/>
            <person name="Barlow K.F."/>
            <person name="Barrett I.P."/>
            <person name="Bates K.N."/>
            <person name="Beare D.M."/>
            <person name="Beasley H."/>
            <person name="Beasley O."/>
            <person name="Beck A."/>
            <person name="Bethel G."/>
            <person name="Blechschmidt K."/>
            <person name="Brady N."/>
            <person name="Bray-Allen S."/>
            <person name="Bridgeman A.M."/>
            <person name="Brown A.J."/>
            <person name="Brown M.J."/>
            <person name="Bonnin D."/>
            <person name="Bruford E.A."/>
            <person name="Buhay C."/>
            <person name="Burch P."/>
            <person name="Burford D."/>
            <person name="Burgess J."/>
            <person name="Burrill W."/>
            <person name="Burton J."/>
            <person name="Bye J.M."/>
            <person name="Carder C."/>
            <person name="Carrel L."/>
            <person name="Chako J."/>
            <person name="Chapman J.C."/>
            <person name="Chavez D."/>
            <person name="Chen E."/>
            <person name="Chen G."/>
            <person name="Chen Y."/>
            <person name="Chen Z."/>
            <person name="Chinault C."/>
            <person name="Ciccodicola A."/>
            <person name="Clark S.Y."/>
            <person name="Clarke G."/>
            <person name="Clee C.M."/>
            <person name="Clegg S."/>
            <person name="Clerc-Blankenburg K."/>
            <person name="Clifford K."/>
            <person name="Cobley V."/>
            <person name="Cole C.G."/>
            <person name="Conquer J.S."/>
            <person name="Corby N."/>
            <person name="Connor R.E."/>
            <person name="David R."/>
            <person name="Davies J."/>
            <person name="Davis C."/>
            <person name="Davis J."/>
            <person name="Delgado O."/>
            <person name="Deshazo D."/>
            <person name="Dhami P."/>
            <person name="Ding Y."/>
            <person name="Dinh H."/>
            <person name="Dodsworth S."/>
            <person name="Draper H."/>
            <person name="Dugan-Rocha S."/>
            <person name="Dunham A."/>
            <person name="Dunn M."/>
            <person name="Durbin K.J."/>
            <person name="Dutta I."/>
            <person name="Eades T."/>
            <person name="Ellwood M."/>
            <person name="Emery-Cohen A."/>
            <person name="Errington H."/>
            <person name="Evans K.L."/>
            <person name="Faulkner L."/>
            <person name="Francis F."/>
            <person name="Frankland J."/>
            <person name="Fraser A.E."/>
            <person name="Galgoczy P."/>
            <person name="Gilbert J."/>
            <person name="Gill R."/>
            <person name="Gloeckner G."/>
            <person name="Gregory S.G."/>
            <person name="Gribble S."/>
            <person name="Griffiths C."/>
            <person name="Grocock R."/>
            <person name="Gu Y."/>
            <person name="Gwilliam R."/>
            <person name="Hamilton C."/>
            <person name="Hart E.A."/>
            <person name="Hawes A."/>
            <person name="Heath P.D."/>
            <person name="Heitmann K."/>
            <person name="Hennig S."/>
            <person name="Hernandez J."/>
            <person name="Hinzmann B."/>
            <person name="Ho S."/>
            <person name="Hoffs M."/>
            <person name="Howden P.J."/>
            <person name="Huckle E.J."/>
            <person name="Hume J."/>
            <person name="Hunt P.J."/>
            <person name="Hunt A.R."/>
            <person name="Isherwood J."/>
            <person name="Jacob L."/>
            <person name="Johnson D."/>
            <person name="Jones S."/>
            <person name="de Jong P.J."/>
            <person name="Joseph S.S."/>
            <person name="Keenan S."/>
            <person name="Kelly S."/>
            <person name="Kershaw J.K."/>
            <person name="Khan Z."/>
            <person name="Kioschis P."/>
            <person name="Klages S."/>
            <person name="Knights A.J."/>
            <person name="Kosiura A."/>
            <person name="Kovar-Smith C."/>
            <person name="Laird G.K."/>
            <person name="Langford C."/>
            <person name="Lawlor S."/>
            <person name="Leversha M."/>
            <person name="Lewis L."/>
            <person name="Liu W."/>
            <person name="Lloyd C."/>
            <person name="Lloyd D.M."/>
            <person name="Loulseged H."/>
            <person name="Loveland J.E."/>
            <person name="Lovell J.D."/>
            <person name="Lozado R."/>
            <person name="Lu J."/>
            <person name="Lyne R."/>
            <person name="Ma J."/>
            <person name="Maheshwari M."/>
            <person name="Matthews L.H."/>
            <person name="McDowall J."/>
            <person name="McLaren S."/>
            <person name="McMurray A."/>
            <person name="Meidl P."/>
            <person name="Meitinger T."/>
            <person name="Milne S."/>
            <person name="Miner G."/>
            <person name="Mistry S.L."/>
            <person name="Morgan M."/>
            <person name="Morris S."/>
            <person name="Mueller I."/>
            <person name="Mullikin J.C."/>
            <person name="Nguyen N."/>
            <person name="Nordsiek G."/>
            <person name="Nyakatura G."/>
            <person name="O'dell C.N."/>
            <person name="Okwuonu G."/>
            <person name="Palmer S."/>
            <person name="Pandian R."/>
            <person name="Parker D."/>
            <person name="Parrish J."/>
            <person name="Pasternak S."/>
            <person name="Patel D."/>
            <person name="Pearce A.V."/>
            <person name="Pearson D.M."/>
            <person name="Pelan S.E."/>
            <person name="Perez L."/>
            <person name="Porter K.M."/>
            <person name="Ramsey Y."/>
            <person name="Reichwald K."/>
            <person name="Rhodes S."/>
            <person name="Ridler K.A."/>
            <person name="Schlessinger D."/>
            <person name="Schueler M.G."/>
            <person name="Sehra H.K."/>
            <person name="Shaw-Smith C."/>
            <person name="Shen H."/>
            <person name="Sheridan E.M."/>
            <person name="Shownkeen R."/>
            <person name="Skuce C.D."/>
            <person name="Smith M.L."/>
            <person name="Sotheran E.C."/>
            <person name="Steingruber H.E."/>
            <person name="Steward C.A."/>
            <person name="Storey R."/>
            <person name="Swann R.M."/>
            <person name="Swarbreck D."/>
            <person name="Tabor P.E."/>
            <person name="Taudien S."/>
            <person name="Taylor T."/>
            <person name="Teague B."/>
            <person name="Thomas K."/>
            <person name="Thorpe A."/>
            <person name="Timms K."/>
            <person name="Tracey A."/>
            <person name="Trevanion S."/>
            <person name="Tromans A.C."/>
            <person name="d'Urso M."/>
            <person name="Verduzco D."/>
            <person name="Villasana D."/>
            <person name="Waldron L."/>
            <person name="Wall M."/>
            <person name="Wang Q."/>
            <person name="Warren J."/>
            <person name="Warry G.L."/>
            <person name="Wei X."/>
            <person name="West A."/>
            <person name="Whitehead S.L."/>
            <person name="Whiteley M.N."/>
            <person name="Wilkinson J.E."/>
            <person name="Willey D.L."/>
            <person name="Williams G."/>
            <person name="Williams L."/>
            <person name="Williamson A."/>
            <person name="Williamson H."/>
            <person name="Wilming L."/>
            <person name="Woodmansey R.L."/>
            <person name="Wray P.W."/>
            <person name="Yen J."/>
            <person name="Zhang J."/>
            <person name="Zhou J."/>
            <person name="Zoghbi H."/>
            <person name="Zorilla S."/>
            <person name="Buck D."/>
            <person name="Reinhardt R."/>
            <person name="Poustka A."/>
            <person name="Rosenthal A."/>
            <person name="Lehrach H."/>
            <person name="Meindl A."/>
            <person name="Minx P.J."/>
            <person name="Hillier L.W."/>
            <person name="Willard H.F."/>
            <person name="Wilson R.K."/>
            <person name="Waterston R.H."/>
            <person name="Rice C.M."/>
            <person name="Vaudin M."/>
            <person name="Coulson A."/>
            <person name="Nelson D.L."/>
            <person name="Weinstock G."/>
            <person name="Sulston J.E."/>
            <person name="Durbin R.M."/>
            <person name="Hubbard T."/>
            <person name="Gibbs R.A."/>
            <person name="Beck S."/>
            <person name="Rogers J."/>
            <person name="Bentley D.R."/>
        </authorList>
    </citation>
    <scope>NUCLEOTIDE SEQUENCE [LARGE SCALE GENOMIC DNA]</scope>
</reference>
<reference key="10">
    <citation type="submission" date="2005-07" db="EMBL/GenBank/DDBJ databases">
        <authorList>
            <person name="Mural R.J."/>
            <person name="Istrail S."/>
            <person name="Sutton G."/>
            <person name="Florea L."/>
            <person name="Halpern A.L."/>
            <person name="Mobarry C.M."/>
            <person name="Lippert R."/>
            <person name="Walenz B."/>
            <person name="Shatkay H."/>
            <person name="Dew I."/>
            <person name="Miller J.R."/>
            <person name="Flanigan M.J."/>
            <person name="Edwards N.J."/>
            <person name="Bolanos R."/>
            <person name="Fasulo D."/>
            <person name="Halldorsson B.V."/>
            <person name="Hannenhalli S."/>
            <person name="Turner R."/>
            <person name="Yooseph S."/>
            <person name="Lu F."/>
            <person name="Nusskern D.R."/>
            <person name="Shue B.C."/>
            <person name="Zheng X.H."/>
            <person name="Zhong F."/>
            <person name="Delcher A.L."/>
            <person name="Huson D.H."/>
            <person name="Kravitz S.A."/>
            <person name="Mouchard L."/>
            <person name="Reinert K."/>
            <person name="Remington K.A."/>
            <person name="Clark A.G."/>
            <person name="Waterman M.S."/>
            <person name="Eichler E.E."/>
            <person name="Adams M.D."/>
            <person name="Hunkapiller M.W."/>
            <person name="Myers E.W."/>
            <person name="Venter J.C."/>
        </authorList>
    </citation>
    <scope>NUCLEOTIDE SEQUENCE [LARGE SCALE GENOMIC DNA]</scope>
</reference>
<reference key="11">
    <citation type="journal article" date="2004" name="Genome Res.">
        <title>The status, quality, and expansion of the NIH full-length cDNA project: the Mammalian Gene Collection (MGC).</title>
        <authorList>
            <consortium name="The MGC Project Team"/>
        </authorList>
    </citation>
    <scope>NUCLEOTIDE SEQUENCE [LARGE SCALE MRNA] (ISOFORMS 1 AND 3)</scope>
    <source>
        <tissue>Colon</tissue>
        <tissue>Melanoma</tissue>
    </source>
</reference>
<reference key="12">
    <citation type="submission" date="2004-06" db="EMBL/GenBank/DDBJ databases">
        <title>Cloning of human full open reading frames in Gateway(TM) system entry vector (pDONR201).</title>
        <authorList>
            <person name="Ebert L."/>
            <person name="Schick M."/>
            <person name="Neubert P."/>
            <person name="Schatten R."/>
            <person name="Henze S."/>
            <person name="Korn B."/>
        </authorList>
    </citation>
    <scope>NUCLEOTIDE SEQUENCE [LARGE SCALE MRNA] OF 5-134</scope>
</reference>
<reference key="13">
    <citation type="journal article" date="2001" name="Blood">
        <title>Modulation of T-cell activation by the glucocorticoid-induced leucine zipper factor via inhibition of nuclear factor kappa B.</title>
        <authorList>
            <person name="Ayroldi E."/>
            <person name="Migliorati G."/>
            <person name="Bruscoli S."/>
            <person name="Marchetti C."/>
            <person name="Zollo O."/>
            <person name="Cannarile L."/>
            <person name="D'Adamio F."/>
            <person name="Riccardi C."/>
        </authorList>
    </citation>
    <scope>FUNCTION</scope>
    <scope>INTERACTION WITH NFKB1</scope>
</reference>
<reference key="14">
    <citation type="journal article" date="2003" name="Blood">
        <title>Synthesis of glucocorticoid-induced leucine zipper (GILZ) by macrophages: an anti-inflammatory and immunosuppressive mechanism shared by glucocorticoids and IL-10.</title>
        <authorList>
            <person name="Berrebi D."/>
            <person name="Bruscoli S."/>
            <person name="Cohen N."/>
            <person name="Foussat A."/>
            <person name="Migliorati G."/>
            <person name="Bouchet-Delbos L."/>
            <person name="Maillot M.-C."/>
            <person name="Portier A."/>
            <person name="Couderc J."/>
            <person name="Galanaud P."/>
            <person name="Peuchmaur M."/>
            <person name="Riccardi C."/>
            <person name="Emilie D."/>
        </authorList>
    </citation>
    <scope>FUNCTION</scope>
    <scope>TISSUE SPECIFICITY</scope>
    <scope>INDUCTION</scope>
    <scope>INTERACTION WITH NFKB1</scope>
</reference>
<reference key="15">
    <citation type="journal article" date="2004" name="Blood">
        <title>GILZ, a new target for the transcription factor FoxO3, protects T lymphocytes from interleukin-2 withdrawal-induced apoptosis.</title>
        <authorList>
            <person name="Asselin-Labat M.-L."/>
            <person name="David M."/>
            <person name="Biola-Vidamment A."/>
            <person name="Lecoeuche D."/>
            <person name="Zennaro M.-C."/>
            <person name="Bertoglio J."/>
            <person name="Pallardy M."/>
        </authorList>
    </citation>
    <scope>FUNCTION</scope>
    <scope>INDUCTION</scope>
</reference>
<reference key="16">
    <citation type="journal article" date="2008" name="Proc. Natl. Acad. Sci. U.S.A.">
        <title>A quantitative atlas of mitotic phosphorylation.</title>
        <authorList>
            <person name="Dephoure N."/>
            <person name="Zhou C."/>
            <person name="Villen J."/>
            <person name="Beausoleil S.A."/>
            <person name="Bakalarski C.E."/>
            <person name="Elledge S.J."/>
            <person name="Gygi S.P."/>
        </authorList>
    </citation>
    <scope>PHOSPHORYLATION [LARGE SCALE ANALYSIS] AT SER-42 AND SER-73 (ISOFORM 2)</scope>
    <scope>IDENTIFICATION BY MASS SPECTROMETRY [LARGE SCALE ANALYSIS]</scope>
    <source>
        <tissue>Cervix carcinoma</tissue>
    </source>
</reference>
<reference key="17">
    <citation type="journal article" date="2009" name="Anal. Chem.">
        <title>Lys-N and trypsin cover complementary parts of the phosphoproteome in a refined SCX-based approach.</title>
        <authorList>
            <person name="Gauci S."/>
            <person name="Helbig A.O."/>
            <person name="Slijper M."/>
            <person name="Krijgsveld J."/>
            <person name="Heck A.J."/>
            <person name="Mohammed S."/>
        </authorList>
    </citation>
    <scope>IDENTIFICATION BY MASS SPECTROMETRY [LARGE SCALE ANALYSIS]</scope>
</reference>
<reference key="18">
    <citation type="journal article" date="2010" name="Sci. Signal.">
        <title>Quantitative phosphoproteomics reveals widespread full phosphorylation site occupancy during mitosis.</title>
        <authorList>
            <person name="Olsen J.V."/>
            <person name="Vermeulen M."/>
            <person name="Santamaria A."/>
            <person name="Kumar C."/>
            <person name="Miller M.L."/>
            <person name="Jensen L.J."/>
            <person name="Gnad F."/>
            <person name="Cox J."/>
            <person name="Jensen T.S."/>
            <person name="Nigg E.A."/>
            <person name="Brunak S."/>
            <person name="Mann M."/>
        </authorList>
    </citation>
    <scope>IDENTIFICATION BY MASS SPECTROMETRY [LARGE SCALE ANALYSIS]</scope>
    <source>
        <tissue>Cervix carcinoma</tissue>
    </source>
</reference>
<reference key="19">
    <citation type="journal article" date="2013" name="J. Proteome Res.">
        <title>Toward a comprehensive characterization of a human cancer cell phosphoproteome.</title>
        <authorList>
            <person name="Zhou H."/>
            <person name="Di Palma S."/>
            <person name="Preisinger C."/>
            <person name="Peng M."/>
            <person name="Polat A.N."/>
            <person name="Heck A.J."/>
            <person name="Mohammed S."/>
        </authorList>
    </citation>
    <scope>PHOSPHORYLATION [LARGE SCALE ANALYSIS] AT SER-102</scope>
    <scope>IDENTIFICATION BY MASS SPECTROMETRY [LARGE SCALE ANALYSIS]</scope>
    <source>
        <tissue>Cervix carcinoma</tissue>
    </source>
</reference>
<reference key="20">
    <citation type="journal article" date="2016" name="J. Cell. Biochem.">
        <title>TSC-22 Promotes Interleukin-2-Deprivation Induced Apoptosis in T-Lymphocytes.</title>
        <authorList>
            <person name="Pepin A."/>
            <person name="Espinasse M.A."/>
            <person name="Latre de Late P."/>
            <person name="Szely N."/>
            <person name="Pallardy M."/>
            <person name="Biola-Vidamment A."/>
        </authorList>
    </citation>
    <scope>TISSUE SPECIFICITY</scope>
    <scope>INDUCTION BY IL2 DEPRIVATION</scope>
</reference>
<reference key="21">
    <citation type="journal article" date="2023" name="Life. Sci Alliance">
        <title>N-terminal proteoforms may engage in different protein complexes.</title>
        <authorList>
            <person name="Bogaert A."/>
            <person name="Fijalkowska D."/>
            <person name="Staes A."/>
            <person name="Van de Steene T."/>
            <person name="Vuylsteke M."/>
            <person name="Stadler C."/>
            <person name="Eyckerman S."/>
            <person name="Spirohn K."/>
            <person name="Hao T."/>
            <person name="Calderwood M.A."/>
            <person name="Gevaert K."/>
        </authorList>
    </citation>
    <scope>ACETYLATION AT MET-1 (ISOFORMS 1 AND 3)</scope>
</reference>
<keyword id="KW-0007">Acetylation</keyword>
<keyword id="KW-0025">Alternative splicing</keyword>
<keyword id="KW-0963">Cytoplasm</keyword>
<keyword id="KW-0539">Nucleus</keyword>
<keyword id="KW-0597">Phosphoprotein</keyword>
<keyword id="KW-1267">Proteomics identification</keyword>
<keyword id="KW-1185">Reference proteome</keyword>
<gene>
    <name evidence="14" type="primary">TSC22D3</name>
    <name evidence="14" type="synonym">DSIPI</name>
    <name evidence="10" type="synonym">GILZ</name>
</gene>
<proteinExistence type="evidence at protein level"/>